<evidence type="ECO:0000250" key="1"/>
<evidence type="ECO:0000255" key="2"/>
<evidence type="ECO:0000269" key="3">
    <source>
    </source>
</evidence>
<evidence type="ECO:0000305" key="4"/>
<accession>Q9FVV6</accession>
<accession>F4I8H2</accession>
<accession>Q68EC5</accession>
<sequence length="701" mass="80713">MDDFSNLEKHESELGAFFGDLAFEEDSRSEDISLEGLQQELEECESDEVVANILSSGDKLREYAKGVENNLRKVELDSVEVAILLPDYIKESDKLVSLHDQIRDCNCILSQMETLLSGFQEEIGSISSDIKILQENSMDMGLRLKNRRVTESKLAKFVEDFIVPPKMIHVIVDGEVNEEYIKTLGILSKKLKFVETDQAVKSSKALKDVEPELEKLRQKAISKVYDFIVQKLIALRKPKTNIQILQQSVFLKYKYIISFLKEHGKEVFMDVRAAYIDTMNKVLSAHFQSYIQAFEKLQLDIATSNDLIGVDTRSTGLFSRSKEPLKNRCAVFALGERIQIIKEIDQPALIPHIAEASSLKYPYEVLFRSLHKLLMDTATSEYIFCEDFFGEQSIFYEIFAGPFSVIYEHLDSVLSSCYDAIGLLLMIRIIHHHQLIMSRRRIPCLDSYLDKVNISLWPRFKTVFDLHIGSLRNANINTIWEDDVHPHYIMRRYAEFTASFIHLNVEYGDGQLDINLERLRMAVDSLILKLAKLFPRPKQQMVFLINNYDMTIAVLKEAEPEGGKIQMHFEELLKSNTSLFAEELLVEHFSDMIKFVKSRANEDSSPNLERSITVAEVEPLVKDFGSRWKTAIELMHKDIITCFSNFLCGMDILIAGMTQLLLYYTRLEDCIKKIDGGSALNRDIVNYQSIMFEIKKYKKTF</sequence>
<keyword id="KW-0175">Coiled coil</keyword>
<keyword id="KW-0967">Endosome</keyword>
<keyword id="KW-0333">Golgi apparatus</keyword>
<keyword id="KW-0472">Membrane</keyword>
<keyword id="KW-0653">Protein transport</keyword>
<keyword id="KW-1185">Reference proteome</keyword>
<keyword id="KW-0813">Transport</keyword>
<organism>
    <name type="scientific">Arabidopsis thaliana</name>
    <name type="common">Mouse-ear cress</name>
    <dbReference type="NCBI Taxonomy" id="3702"/>
    <lineage>
        <taxon>Eukaryota</taxon>
        <taxon>Viridiplantae</taxon>
        <taxon>Streptophyta</taxon>
        <taxon>Embryophyta</taxon>
        <taxon>Tracheophyta</taxon>
        <taxon>Spermatophyta</taxon>
        <taxon>Magnoliopsida</taxon>
        <taxon>eudicotyledons</taxon>
        <taxon>Gunneridae</taxon>
        <taxon>Pentapetalae</taxon>
        <taxon>rosids</taxon>
        <taxon>malvids</taxon>
        <taxon>Brassicales</taxon>
        <taxon>Brassicaceae</taxon>
        <taxon>Camelineae</taxon>
        <taxon>Arabidopsis</taxon>
    </lineage>
</organism>
<proteinExistence type="evidence at transcript level"/>
<feature type="chain" id="PRO_0000424844" description="Vacuolar protein sorting-associated protein 52 B">
    <location>
        <begin position="1"/>
        <end position="701"/>
    </location>
</feature>
<feature type="coiled-coil region" evidence="2">
    <location>
        <begin position="23"/>
        <end position="45"/>
    </location>
</feature>
<feature type="coiled-coil region" evidence="2">
    <location>
        <begin position="511"/>
        <end position="533"/>
    </location>
</feature>
<feature type="sequence conflict" description="In Ref. 1; DAA01356." evidence="4" ref="1">
    <original>R</original>
    <variation>C</variation>
    <location>
        <position position="28"/>
    </location>
</feature>
<feature type="sequence conflict" description="In Ref. 1; DAA01356." evidence="4" ref="1">
    <original>E</original>
    <variation>K</variation>
    <location>
        <position position="35"/>
    </location>
</feature>
<feature type="sequence conflict" description="In Ref. 1; DAA01356." evidence="4" ref="1">
    <original>P</original>
    <variation>T</variation>
    <location>
        <position position="86"/>
    </location>
</feature>
<feature type="sequence conflict" description="In Ref. 1; DAA01356." evidence="4" ref="1">
    <original>N</original>
    <variation>D</variation>
    <location>
        <position position="106"/>
    </location>
</feature>
<reference key="1">
    <citation type="journal article" date="2004" name="Plant Physiol.">
        <title>The putative Arabidopsis homolog of yeast vps52p is required for pollen tube elongation, localizes to Golgi, and might be involved in vesicle trafficking.</title>
        <authorList>
            <person name="Lobstein E."/>
            <person name="Guyon A."/>
            <person name="Ferault M."/>
            <person name="Twell D."/>
            <person name="Pelletier G."/>
            <person name="Bonhomme S."/>
        </authorList>
    </citation>
    <scope>NUCLEOTIDE SEQUENCE [MRNA]</scope>
    <scope>TISSUE SPECIFICITY</scope>
    <scope>GENE FAMILY</scope>
    <scope>NOMENCLATURE</scope>
</reference>
<reference key="2">
    <citation type="journal article" date="2000" name="Nature">
        <title>Sequence and analysis of chromosome 1 of the plant Arabidopsis thaliana.</title>
        <authorList>
            <person name="Theologis A."/>
            <person name="Ecker J.R."/>
            <person name="Palm C.J."/>
            <person name="Federspiel N.A."/>
            <person name="Kaul S."/>
            <person name="White O."/>
            <person name="Alonso J."/>
            <person name="Altafi H."/>
            <person name="Araujo R."/>
            <person name="Bowman C.L."/>
            <person name="Brooks S.Y."/>
            <person name="Buehler E."/>
            <person name="Chan A."/>
            <person name="Chao Q."/>
            <person name="Chen H."/>
            <person name="Cheuk R.F."/>
            <person name="Chin C.W."/>
            <person name="Chung M.K."/>
            <person name="Conn L."/>
            <person name="Conway A.B."/>
            <person name="Conway A.R."/>
            <person name="Creasy T.H."/>
            <person name="Dewar K."/>
            <person name="Dunn P."/>
            <person name="Etgu P."/>
            <person name="Feldblyum T.V."/>
            <person name="Feng J.-D."/>
            <person name="Fong B."/>
            <person name="Fujii C.Y."/>
            <person name="Gill J.E."/>
            <person name="Goldsmith A.D."/>
            <person name="Haas B."/>
            <person name="Hansen N.F."/>
            <person name="Hughes B."/>
            <person name="Huizar L."/>
            <person name="Hunter J.L."/>
            <person name="Jenkins J."/>
            <person name="Johnson-Hopson C."/>
            <person name="Khan S."/>
            <person name="Khaykin E."/>
            <person name="Kim C.J."/>
            <person name="Koo H.L."/>
            <person name="Kremenetskaia I."/>
            <person name="Kurtz D.B."/>
            <person name="Kwan A."/>
            <person name="Lam B."/>
            <person name="Langin-Hooper S."/>
            <person name="Lee A."/>
            <person name="Lee J.M."/>
            <person name="Lenz C.A."/>
            <person name="Li J.H."/>
            <person name="Li Y.-P."/>
            <person name="Lin X."/>
            <person name="Liu S.X."/>
            <person name="Liu Z.A."/>
            <person name="Luros J.S."/>
            <person name="Maiti R."/>
            <person name="Marziali A."/>
            <person name="Militscher J."/>
            <person name="Miranda M."/>
            <person name="Nguyen M."/>
            <person name="Nierman W.C."/>
            <person name="Osborne B.I."/>
            <person name="Pai G."/>
            <person name="Peterson J."/>
            <person name="Pham P.K."/>
            <person name="Rizzo M."/>
            <person name="Rooney T."/>
            <person name="Rowley D."/>
            <person name="Sakano H."/>
            <person name="Salzberg S.L."/>
            <person name="Schwartz J.R."/>
            <person name="Shinn P."/>
            <person name="Southwick A.M."/>
            <person name="Sun H."/>
            <person name="Tallon L.J."/>
            <person name="Tambunga G."/>
            <person name="Toriumi M.J."/>
            <person name="Town C.D."/>
            <person name="Utterback T."/>
            <person name="Van Aken S."/>
            <person name="Vaysberg M."/>
            <person name="Vysotskaia V.S."/>
            <person name="Walker M."/>
            <person name="Wu D."/>
            <person name="Yu G."/>
            <person name="Fraser C.M."/>
            <person name="Venter J.C."/>
            <person name="Davis R.W."/>
        </authorList>
    </citation>
    <scope>NUCLEOTIDE SEQUENCE [LARGE SCALE GENOMIC DNA]</scope>
    <source>
        <strain>cv. Columbia</strain>
    </source>
</reference>
<reference key="3">
    <citation type="journal article" date="2017" name="Plant J.">
        <title>Araport11: a complete reannotation of the Arabidopsis thaliana reference genome.</title>
        <authorList>
            <person name="Cheng C.Y."/>
            <person name="Krishnakumar V."/>
            <person name="Chan A.P."/>
            <person name="Thibaud-Nissen F."/>
            <person name="Schobel S."/>
            <person name="Town C.D."/>
        </authorList>
    </citation>
    <scope>GENOME REANNOTATION</scope>
    <source>
        <strain>cv. Columbia</strain>
    </source>
</reference>
<comment type="function">
    <text evidence="1">May be involved in retrograde transport of early and late endosomes to the late Golgi.</text>
</comment>
<comment type="subunit">
    <text evidence="1">Component of the Golgi-associated retrograde protein (GARP) complex.</text>
</comment>
<comment type="subcellular location">
    <subcellularLocation>
        <location evidence="1">Golgi apparatus</location>
        <location evidence="1">trans-Golgi network membrane</location>
        <topology evidence="1">Peripheral membrane protein</topology>
    </subcellularLocation>
    <subcellularLocation>
        <location evidence="1">Endosome membrane</location>
        <topology evidence="1">Peripheral membrane protein</topology>
    </subcellularLocation>
    <subcellularLocation>
        <location evidence="1">Golgi apparatus membrane</location>
        <topology evidence="1">Peripheral membrane protein</topology>
    </subcellularLocation>
</comment>
<comment type="tissue specificity">
    <text evidence="3">Detected in pollen.</text>
</comment>
<comment type="similarity">
    <text evidence="4">Belongs to the VPS52 family.</text>
</comment>
<gene>
    <name type="primary">P2</name>
    <name type="ordered locus">At1g71300</name>
    <name type="ORF">F3I17.5</name>
</gene>
<dbReference type="EMBL" id="BK000523">
    <property type="protein sequence ID" value="DAA01356.1"/>
    <property type="molecule type" value="mRNA"/>
</dbReference>
<dbReference type="EMBL" id="AC016162">
    <property type="protein sequence ID" value="AAG51887.1"/>
    <property type="molecule type" value="Genomic_DNA"/>
</dbReference>
<dbReference type="EMBL" id="CP002684">
    <property type="protein sequence ID" value="ANM58262.1"/>
    <property type="molecule type" value="Genomic_DNA"/>
</dbReference>
<dbReference type="PIR" id="G96737">
    <property type="entry name" value="G96737"/>
</dbReference>
<dbReference type="RefSeq" id="NP_001320711.1">
    <property type="nucleotide sequence ID" value="NM_001334495.1"/>
</dbReference>
<dbReference type="SMR" id="Q9FVV6"/>
<dbReference type="BioGRID" id="28691">
    <property type="interactions" value="1"/>
</dbReference>
<dbReference type="FunCoup" id="Q9FVV6">
    <property type="interactions" value="3603"/>
</dbReference>
<dbReference type="STRING" id="3702.Q9FVV6"/>
<dbReference type="PaxDb" id="3702-AT1G71300.1"/>
<dbReference type="ProteomicsDB" id="242667"/>
<dbReference type="EnsemblPlants" id="AT1G71300.2">
    <property type="protein sequence ID" value="AT1G71300.2"/>
    <property type="gene ID" value="AT1G71300"/>
</dbReference>
<dbReference type="GeneID" id="843471"/>
<dbReference type="Gramene" id="AT1G71300.2">
    <property type="protein sequence ID" value="AT1G71300.2"/>
    <property type="gene ID" value="AT1G71300"/>
</dbReference>
<dbReference type="KEGG" id="ath:AT1G71300"/>
<dbReference type="Araport" id="AT1G71300"/>
<dbReference type="TAIR" id="AT1G71300"/>
<dbReference type="eggNOG" id="KOG1961">
    <property type="taxonomic scope" value="Eukaryota"/>
</dbReference>
<dbReference type="HOGENOM" id="CLU_010797_0_1_1"/>
<dbReference type="InParanoid" id="Q9FVV6"/>
<dbReference type="OMA" id="PIRTSMT"/>
<dbReference type="PhylomeDB" id="Q9FVV6"/>
<dbReference type="PRO" id="PR:Q9FVV6"/>
<dbReference type="Proteomes" id="UP000006548">
    <property type="component" value="Chromosome 1"/>
</dbReference>
<dbReference type="ExpressionAtlas" id="Q9FVV6">
    <property type="expression patterns" value="baseline and differential"/>
</dbReference>
<dbReference type="GO" id="GO:0010008">
    <property type="term" value="C:endosome membrane"/>
    <property type="evidence" value="ECO:0007669"/>
    <property type="project" value="UniProtKB-SubCell"/>
</dbReference>
<dbReference type="GO" id="GO:0000139">
    <property type="term" value="C:Golgi membrane"/>
    <property type="evidence" value="ECO:0007669"/>
    <property type="project" value="UniProtKB-SubCell"/>
</dbReference>
<dbReference type="GO" id="GO:0015031">
    <property type="term" value="P:protein transport"/>
    <property type="evidence" value="ECO:0007669"/>
    <property type="project" value="UniProtKB-KW"/>
</dbReference>
<dbReference type="InterPro" id="IPR007258">
    <property type="entry name" value="Vps52"/>
</dbReference>
<dbReference type="InterPro" id="IPR048361">
    <property type="entry name" value="Vps52_C"/>
</dbReference>
<dbReference type="InterPro" id="IPR048319">
    <property type="entry name" value="Vps52_CC"/>
</dbReference>
<dbReference type="PANTHER" id="PTHR14190">
    <property type="entry name" value="SUPPRESSOR OF ACTIN MUTATIONS 2/VACUOLAR PROTEIN SORTING 52"/>
    <property type="match status" value="1"/>
</dbReference>
<dbReference type="PANTHER" id="PTHR14190:SF7">
    <property type="entry name" value="VACUOLAR PROTEIN SORTING-ASSOCIATED PROTEIN 52 HOMOLOG"/>
    <property type="match status" value="1"/>
</dbReference>
<dbReference type="Pfam" id="PF20655">
    <property type="entry name" value="Vps52_C"/>
    <property type="match status" value="1"/>
</dbReference>
<dbReference type="Pfam" id="PF04129">
    <property type="entry name" value="Vps52_CC"/>
    <property type="match status" value="1"/>
</dbReference>
<protein>
    <recommendedName>
        <fullName>Vacuolar protein sorting-associated protein 52 B</fullName>
    </recommendedName>
    <alternativeName>
        <fullName>ARE1-like protein P2</fullName>
    </alternativeName>
</protein>
<name>VP52B_ARATH</name>